<proteinExistence type="inferred from homology"/>
<dbReference type="EC" id="2.6.-.-"/>
<dbReference type="EMBL" id="AF015775">
    <property type="protein sequence ID" value="AAB72074.1"/>
    <property type="molecule type" value="Genomic_DNA"/>
</dbReference>
<dbReference type="EMBL" id="AF006665">
    <property type="protein sequence ID" value="AAB81154.1"/>
    <property type="molecule type" value="Genomic_DNA"/>
</dbReference>
<dbReference type="EMBL" id="AL009126">
    <property type="protein sequence ID" value="CAB13865.1"/>
    <property type="molecule type" value="Genomic_DNA"/>
</dbReference>
<dbReference type="PIR" id="F69904">
    <property type="entry name" value="F69904"/>
</dbReference>
<dbReference type="RefSeq" id="NP_389855.1">
    <property type="nucleotide sequence ID" value="NC_000964.3"/>
</dbReference>
<dbReference type="RefSeq" id="WP_003230836.1">
    <property type="nucleotide sequence ID" value="NZ_OZ025638.1"/>
</dbReference>
<dbReference type="SMR" id="O34662"/>
<dbReference type="FunCoup" id="O34662">
    <property type="interactions" value="194"/>
</dbReference>
<dbReference type="STRING" id="224308.BSU19740"/>
<dbReference type="PaxDb" id="224308-BSU19740"/>
<dbReference type="DNASU" id="940050"/>
<dbReference type="EnsemblBacteria" id="CAB13865">
    <property type="protein sequence ID" value="CAB13865"/>
    <property type="gene ID" value="BSU_19740"/>
</dbReference>
<dbReference type="GeneID" id="940050"/>
<dbReference type="KEGG" id="bsu:BSU19740"/>
<dbReference type="PATRIC" id="fig|224308.179.peg.2161"/>
<dbReference type="eggNOG" id="COG0161">
    <property type="taxonomic scope" value="Bacteria"/>
</dbReference>
<dbReference type="InParanoid" id="O34662"/>
<dbReference type="OrthoDB" id="9807885at2"/>
<dbReference type="PhylomeDB" id="O34662"/>
<dbReference type="BioCyc" id="BSUB:BSU19740-MONOMER"/>
<dbReference type="Proteomes" id="UP000001570">
    <property type="component" value="Chromosome"/>
</dbReference>
<dbReference type="GO" id="GO:0030170">
    <property type="term" value="F:pyridoxal phosphate binding"/>
    <property type="evidence" value="ECO:0007669"/>
    <property type="project" value="InterPro"/>
</dbReference>
<dbReference type="GO" id="GO:0008483">
    <property type="term" value="F:transaminase activity"/>
    <property type="evidence" value="ECO:0007669"/>
    <property type="project" value="UniProtKB-KW"/>
</dbReference>
<dbReference type="CDD" id="cd00610">
    <property type="entry name" value="OAT_like"/>
    <property type="match status" value="1"/>
</dbReference>
<dbReference type="Gene3D" id="3.90.1150.10">
    <property type="entry name" value="Aspartate Aminotransferase, domain 1"/>
    <property type="match status" value="1"/>
</dbReference>
<dbReference type="Gene3D" id="3.40.640.10">
    <property type="entry name" value="Type I PLP-dependent aspartate aminotransferase-like (Major domain)"/>
    <property type="match status" value="1"/>
</dbReference>
<dbReference type="InterPro" id="IPR005814">
    <property type="entry name" value="Aminotrans_3"/>
</dbReference>
<dbReference type="InterPro" id="IPR049704">
    <property type="entry name" value="Aminotrans_3_PPA_site"/>
</dbReference>
<dbReference type="InterPro" id="IPR015424">
    <property type="entry name" value="PyrdxlP-dep_Trfase"/>
</dbReference>
<dbReference type="InterPro" id="IPR015421">
    <property type="entry name" value="PyrdxlP-dep_Trfase_major"/>
</dbReference>
<dbReference type="InterPro" id="IPR015422">
    <property type="entry name" value="PyrdxlP-dep_Trfase_small"/>
</dbReference>
<dbReference type="NCBIfam" id="NF005375">
    <property type="entry name" value="PRK06917.1"/>
    <property type="match status" value="1"/>
</dbReference>
<dbReference type="PANTHER" id="PTHR43094">
    <property type="entry name" value="AMINOTRANSFERASE"/>
    <property type="match status" value="1"/>
</dbReference>
<dbReference type="PANTHER" id="PTHR43094:SF1">
    <property type="entry name" value="AMINOTRANSFERASE CLASS-III"/>
    <property type="match status" value="1"/>
</dbReference>
<dbReference type="Pfam" id="PF00202">
    <property type="entry name" value="Aminotran_3"/>
    <property type="match status" value="1"/>
</dbReference>
<dbReference type="SUPFAM" id="SSF53383">
    <property type="entry name" value="PLP-dependent transferases"/>
    <property type="match status" value="1"/>
</dbReference>
<dbReference type="PROSITE" id="PS00600">
    <property type="entry name" value="AA_TRANSFER_CLASS_3"/>
    <property type="match status" value="1"/>
</dbReference>
<evidence type="ECO:0000250" key="1"/>
<evidence type="ECO:0000255" key="2"/>
<evidence type="ECO:0000305" key="3"/>
<keyword id="KW-0032">Aminotransferase</keyword>
<keyword id="KW-0663">Pyridoxal phosphate</keyword>
<keyword id="KW-1185">Reference proteome</keyword>
<keyword id="KW-0808">Transferase</keyword>
<organism>
    <name type="scientific">Bacillus subtilis (strain 168)</name>
    <dbReference type="NCBI Taxonomy" id="224308"/>
    <lineage>
        <taxon>Bacteria</taxon>
        <taxon>Bacillati</taxon>
        <taxon>Bacillota</taxon>
        <taxon>Bacilli</taxon>
        <taxon>Bacillales</taxon>
        <taxon>Bacillaceae</taxon>
        <taxon>Bacillus</taxon>
    </lineage>
</organism>
<comment type="cofactor">
    <cofactor evidence="1">
        <name>pyridoxal 5'-phosphate</name>
        <dbReference type="ChEBI" id="CHEBI:597326"/>
    </cofactor>
</comment>
<comment type="similarity">
    <text evidence="3">Belongs to the class-III pyridoxal-phosphate-dependent aminotransferase family.</text>
</comment>
<protein>
    <recommendedName>
        <fullName>Uncharacterized aminotransferase YodT</fullName>
        <ecNumber>2.6.-.-</ecNumber>
    </recommendedName>
</protein>
<feature type="chain" id="PRO_0000120536" description="Uncharacterized aminotransferase YodT">
    <location>
        <begin position="1"/>
        <end position="444"/>
    </location>
</feature>
<feature type="modified residue" description="N6-(pyridoxal phosphate)lysine" evidence="2">
    <location>
        <position position="268"/>
    </location>
</feature>
<feature type="sequence conflict" description="In Ref. 1; AAB81154." evidence="3" ref="1">
    <original>ADQKTKKVFPPE</original>
    <variation>QTKKRRKCFRQQ</variation>
    <location>
        <begin position="366"/>
        <end position="377"/>
    </location>
</feature>
<reference key="1">
    <citation type="journal article" date="1998" name="DNA Res.">
        <title>Sequence analysis of the Bacillus subtilis 168 chromosome region between the sspC and odhA loci (184 degrees-180 degrees).</title>
        <authorList>
            <person name="Ghim S.-Y."/>
            <person name="Choi S.-K."/>
            <person name="Shin B.-S."/>
            <person name="Jeong Y.-M."/>
            <person name="Sorokin A."/>
            <person name="Ehrlich S.D."/>
            <person name="Park S.-H."/>
        </authorList>
    </citation>
    <scope>NUCLEOTIDE SEQUENCE [GENOMIC DNA]</scope>
    <source>
        <strain>168</strain>
    </source>
</reference>
<reference key="2">
    <citation type="journal article" date="1997" name="Nature">
        <title>The complete genome sequence of the Gram-positive bacterium Bacillus subtilis.</title>
        <authorList>
            <person name="Kunst F."/>
            <person name="Ogasawara N."/>
            <person name="Moszer I."/>
            <person name="Albertini A.M."/>
            <person name="Alloni G."/>
            <person name="Azevedo V."/>
            <person name="Bertero M.G."/>
            <person name="Bessieres P."/>
            <person name="Bolotin A."/>
            <person name="Borchert S."/>
            <person name="Borriss R."/>
            <person name="Boursier L."/>
            <person name="Brans A."/>
            <person name="Braun M."/>
            <person name="Brignell S.C."/>
            <person name="Bron S."/>
            <person name="Brouillet S."/>
            <person name="Bruschi C.V."/>
            <person name="Caldwell B."/>
            <person name="Capuano V."/>
            <person name="Carter N.M."/>
            <person name="Choi S.-K."/>
            <person name="Codani J.-J."/>
            <person name="Connerton I.F."/>
            <person name="Cummings N.J."/>
            <person name="Daniel R.A."/>
            <person name="Denizot F."/>
            <person name="Devine K.M."/>
            <person name="Duesterhoeft A."/>
            <person name="Ehrlich S.D."/>
            <person name="Emmerson P.T."/>
            <person name="Entian K.-D."/>
            <person name="Errington J."/>
            <person name="Fabret C."/>
            <person name="Ferrari E."/>
            <person name="Foulger D."/>
            <person name="Fritz C."/>
            <person name="Fujita M."/>
            <person name="Fujita Y."/>
            <person name="Fuma S."/>
            <person name="Galizzi A."/>
            <person name="Galleron N."/>
            <person name="Ghim S.-Y."/>
            <person name="Glaser P."/>
            <person name="Goffeau A."/>
            <person name="Golightly E.J."/>
            <person name="Grandi G."/>
            <person name="Guiseppi G."/>
            <person name="Guy B.J."/>
            <person name="Haga K."/>
            <person name="Haiech J."/>
            <person name="Harwood C.R."/>
            <person name="Henaut A."/>
            <person name="Hilbert H."/>
            <person name="Holsappel S."/>
            <person name="Hosono S."/>
            <person name="Hullo M.-F."/>
            <person name="Itaya M."/>
            <person name="Jones L.-M."/>
            <person name="Joris B."/>
            <person name="Karamata D."/>
            <person name="Kasahara Y."/>
            <person name="Klaerr-Blanchard M."/>
            <person name="Klein C."/>
            <person name="Kobayashi Y."/>
            <person name="Koetter P."/>
            <person name="Koningstein G."/>
            <person name="Krogh S."/>
            <person name="Kumano M."/>
            <person name="Kurita K."/>
            <person name="Lapidus A."/>
            <person name="Lardinois S."/>
            <person name="Lauber J."/>
            <person name="Lazarevic V."/>
            <person name="Lee S.-M."/>
            <person name="Levine A."/>
            <person name="Liu H."/>
            <person name="Masuda S."/>
            <person name="Mauel C."/>
            <person name="Medigue C."/>
            <person name="Medina N."/>
            <person name="Mellado R.P."/>
            <person name="Mizuno M."/>
            <person name="Moestl D."/>
            <person name="Nakai S."/>
            <person name="Noback M."/>
            <person name="Noone D."/>
            <person name="O'Reilly M."/>
            <person name="Ogawa K."/>
            <person name="Ogiwara A."/>
            <person name="Oudega B."/>
            <person name="Park S.-H."/>
            <person name="Parro V."/>
            <person name="Pohl T.M."/>
            <person name="Portetelle D."/>
            <person name="Porwollik S."/>
            <person name="Prescott A.M."/>
            <person name="Presecan E."/>
            <person name="Pujic P."/>
            <person name="Purnelle B."/>
            <person name="Rapoport G."/>
            <person name="Rey M."/>
            <person name="Reynolds S."/>
            <person name="Rieger M."/>
            <person name="Rivolta C."/>
            <person name="Rocha E."/>
            <person name="Roche B."/>
            <person name="Rose M."/>
            <person name="Sadaie Y."/>
            <person name="Sato T."/>
            <person name="Scanlan E."/>
            <person name="Schleich S."/>
            <person name="Schroeter R."/>
            <person name="Scoffone F."/>
            <person name="Sekiguchi J."/>
            <person name="Sekowska A."/>
            <person name="Seror S.J."/>
            <person name="Serror P."/>
            <person name="Shin B.-S."/>
            <person name="Soldo B."/>
            <person name="Sorokin A."/>
            <person name="Tacconi E."/>
            <person name="Takagi T."/>
            <person name="Takahashi H."/>
            <person name="Takemaru K."/>
            <person name="Takeuchi M."/>
            <person name="Tamakoshi A."/>
            <person name="Tanaka T."/>
            <person name="Terpstra P."/>
            <person name="Tognoni A."/>
            <person name="Tosato V."/>
            <person name="Uchiyama S."/>
            <person name="Vandenbol M."/>
            <person name="Vannier F."/>
            <person name="Vassarotti A."/>
            <person name="Viari A."/>
            <person name="Wambutt R."/>
            <person name="Wedler E."/>
            <person name="Wedler H."/>
            <person name="Weitzenegger T."/>
            <person name="Winters P."/>
            <person name="Wipat A."/>
            <person name="Yamamoto H."/>
            <person name="Yamane K."/>
            <person name="Yasumoto K."/>
            <person name="Yata K."/>
            <person name="Yoshida K."/>
            <person name="Yoshikawa H.-F."/>
            <person name="Zumstein E."/>
            <person name="Yoshikawa H."/>
            <person name="Danchin A."/>
        </authorList>
    </citation>
    <scope>NUCLEOTIDE SEQUENCE [LARGE SCALE GENOMIC DNA]</scope>
    <source>
        <strain>168</strain>
    </source>
</reference>
<name>YODT_BACSU</name>
<gene>
    <name type="primary">yodT</name>
    <name type="synonym">yokM</name>
    <name type="ordered locus">BSU19740</name>
</gene>
<sequence>MSSYLIKPELSSAYPVVSYAKGSYVYDQTGKKYLDGSSGAVTCNIGHGVRDVTEKLKEQLDQVSFAYRSQFTSEPAEQLAALLAQELPGDVNWSFFVNSGSEAIETAMKIAIQYWQEKKQTQKSIFLSRWSSYHGITLGALSLSGFYERRYRFTHLIERYPAISAPHIYRLNHETEEDFVQTAADELDTMIKRIGSQFIAGFVAEPIIGAAGAAITPPPGYYERLSEVCRTHDVLFIADEVMTGLGRTGRMLATEHWDTVPDIAVLGKGLGAGYAPIAAAVVSDSIIETIKQGSGVIMSGHTYSAHPYSAKAALEVLRYVLKHGLIKQSEKKGAVLKKKLDEAASQSGIIGEVRGKGLLLGIEFVADQKTKKVFPPEQAITQLIVSEAKKRGLIVYPSKAGIDSGEGDAVIIAPPFTISDGEMEELISIFSETVAAVEKNLKKD</sequence>
<accession>O34662</accession>
<accession>O30468</accession>